<keyword id="KW-0014">AIDS</keyword>
<keyword id="KW-0053">Apoptosis</keyword>
<keyword id="KW-0244">Early protein</keyword>
<keyword id="KW-1032">Host cell membrane</keyword>
<keyword id="KW-1040">Host Golgi apparatus</keyword>
<keyword id="KW-1043">Host membrane</keyword>
<keyword id="KW-0945">Host-virus interaction</keyword>
<keyword id="KW-1080">Inhibition of host adaptive immune response by virus</keyword>
<keyword id="KW-1083">Inhibition of host autophagy by virus</keyword>
<keyword id="KW-1115">Inhibition of host MHC class I molecule presentation by virus</keyword>
<keyword id="KW-1116">Inhibition of host MHC class II molecule presentation by virus</keyword>
<keyword id="KW-0449">Lipoprotein</keyword>
<keyword id="KW-0472">Membrane</keyword>
<keyword id="KW-0519">Myristate</keyword>
<keyword id="KW-0597">Phosphoprotein</keyword>
<keyword id="KW-1185">Reference proteome</keyword>
<keyword id="KW-0964">Secreted</keyword>
<keyword id="KW-0729">SH3-binding</keyword>
<keyword id="KW-0899">Viral immunoevasion</keyword>
<keyword id="KW-0946">Virion</keyword>
<keyword id="KW-0843">Virulence</keyword>
<reference key="1">
    <citation type="journal article" date="1998" name="Nat. Med.">
        <title>Identification of a new human immunodeficiency virus type 1 distinct from group M and group O.</title>
        <authorList>
            <person name="Simon F."/>
            <person name="Mauclere P."/>
            <person name="Roques P."/>
            <person name="Loussert-Ajaka I."/>
            <person name="Muller-Trutwin M.C."/>
            <person name="Saragosti S."/>
            <person name="Georges-Courbot M.C."/>
            <person name="Barre-Sinoussi F."/>
            <person name="Brun-Vezinet F."/>
        </authorList>
    </citation>
    <scope>NUCLEOTIDE SEQUENCE [GENOMIC DNA]</scope>
</reference>
<reference key="2">
    <citation type="journal article" date="2004" name="J. Virol.">
        <title>Nef proteins from simian immunodeficiency virus-infected chimpanzees interact with p21-activated kinase 2 and modulate cell surface expression of various human receptors.</title>
        <authorList>
            <person name="Kirchhoff F."/>
            <person name="Schindler M."/>
            <person name="Bailer N."/>
            <person name="Renkema G.H."/>
            <person name="Saksela K."/>
            <person name="Knoop V."/>
            <person name="Muller-Trutwin M.C."/>
            <person name="Santiago M.L."/>
            <person name="Bibollet-Ruche F."/>
            <person name="Dittmar M.T."/>
            <person name="Heeney J.L."/>
            <person name="Hahn B.H."/>
            <person name="Munch J."/>
        </authorList>
    </citation>
    <scope>NUCLEOTIDE SEQUENCE [GENOMIC DNA]</scope>
</reference>
<name>NEF_HV1YF</name>
<gene>
    <name evidence="1" type="primary">nef</name>
</gene>
<organism>
    <name type="scientific">Human immunodeficiency virus type 1 group N (isolate YBF30)</name>
    <name type="common">HIV-1</name>
    <dbReference type="NCBI Taxonomy" id="388818"/>
    <lineage>
        <taxon>Viruses</taxon>
        <taxon>Riboviria</taxon>
        <taxon>Pararnavirae</taxon>
        <taxon>Artverviricota</taxon>
        <taxon>Revtraviricetes</taxon>
        <taxon>Ortervirales</taxon>
        <taxon>Retroviridae</taxon>
        <taxon>Orthoretrovirinae</taxon>
        <taxon>Lentivirus</taxon>
        <taxon>Human immunodeficiency virus type 1</taxon>
    </lineage>
</organism>
<organismHost>
    <name type="scientific">Homo sapiens</name>
    <name type="common">Human</name>
    <dbReference type="NCBI Taxonomy" id="9606"/>
</organismHost>
<comment type="function">
    <text evidence="1">Factor of infectivity and pathogenicity, required for optimal virus replication. Alters numerous pathways of T-lymphocyte function and down-regulates immunity surface molecules in order to evade host defense and increase viral infectivity. Alters the functionality of other immunity cells, like dendritic cells, monocytes/macrophages and NK cells.</text>
</comment>
<comment type="function">
    <text evidence="1">In infected CD4(+) T-lymphocytes, down-regulates the surface MHC-I, mature MHC-II, CD4, CD28, CCR5 and CXCR4 molecules. Mediates internalization and degradation of host CD4 through the interaction of with the cytoplasmic tail of CD4, the recruitment of AP-2 (clathrin adapter protein complex 2), internalization through clathrin coated pits, and subsequent transport to endosomes and lysosomes for degradation. Diverts host MHC-I molecules to the trans-Golgi network-associated endosomal compartments by an endocytic pathway to finally target them for degradation. MHC-I down-regulation may involve AP-1 (clathrin adapter protein complex 1) or possibly Src family kinase-ZAP70/Syk-PI3K cascade recruited by PACS2. In consequence infected cells are masked for immune recognition by cytotoxic T-lymphocytes. Decreasing the number of immune receptors also prevents reinfection by more HIV particles (superinfection). Down-regulates host SERINC3 and SERINC5 thereby excluding these proteins from the viral particles. Virion infectivity is drastically higher when SERINC3 or SERINC5 are excluded from the viral envelope, because these host antiviral proteins impair the membrane fusion event necessary for subsequent virion penetration.</text>
</comment>
<comment type="function">
    <text evidence="1">Bypasses host T-cell signaling by inducing a transcriptional program nearly identical to that of anti-CD3 cell activation. Interaction with TCR-zeta chain up-regulates the Fas ligand (FasL). Increasing surface FasL molecules and decreasing surface MHC-I molecules on infected CD4(+) cells send attacking cytotoxic CD8+ T-lymphocytes into apoptosis.</text>
</comment>
<comment type="function">
    <text evidence="1">Plays a role in optimizing the host cell environment for viral replication without causing cell death by apoptosis. Protects the infected cells from apoptosis in order to keep them alive until the next virus generation is ready to strike. Inhibits the Fas and TNFR-mediated death signals by blocking MAP3K5/ASK1. Decreases the half-life of TP53, protecting the infected cell against p53-mediated apoptosis. Inhibits the apoptotic signals regulated by the Bcl-2 family proteins through the formation of a Nef/PI3-kinase/PAK2 complex that leads to activation of PAK2 and induces phosphorylation of host BAD.</text>
</comment>
<comment type="function">
    <text evidence="1">Extracellular Nef protein targets CD4(+) T-lymphocytes for apoptosis by interacting with CXCR4 surface receptors.</text>
</comment>
<comment type="subunit">
    <text evidence="1">Monomer; cytosolic form. Homodimer; membrane bound form. Interacts with Nef associated p21-activated kinase (PAK2); this interaction activates PAK2. Associates with the Nef-MHC-I-AP1 complex; this complex is required for MHC-I internalization. Interacts (via C-terminus) with host PI3-kinase. Interacts with host PACS1; this interaction seems to be weak. Interacts with host PACS2. Interacts with host LCK and MAPK3; these interactions inhibit the kinase activity of the latter. Interacts with host ATP6V1H; this interaction may play a role in CD4 endocytosis. Associates with the CD4-Nef-AP2 complex; this complex is required for CD4 internalization. Interacts with host AP2 subunit alpha and AP2 subunit sigma2. Interacts with TCR-zeta chain; this interaction up-regulates the Fas ligand (FasL) surface expression. Interacts with host HCK, LYN, and SRC; these interactions activate the Src family kinases. Interacts with MAP3K5; this interaction inhibits the Fas and TNFR-mediated death signals. Interacts with beta-COP and PTE1. Interacts with human RACK1; this increases Nef phosphorylation by PKC. Interacts with TP53; this interaction decreases the half-life of TP53, protecting the infected cell against p53-mediated apoptosis.</text>
</comment>
<comment type="subcellular location">
    <subcellularLocation>
        <location evidence="1">Host cell membrane</location>
        <topology evidence="1">Lipid-anchor</topology>
        <orientation evidence="1">Cytoplasmic side</orientation>
    </subcellularLocation>
    <subcellularLocation>
        <location evidence="1">Virion</location>
    </subcellularLocation>
    <subcellularLocation>
        <location evidence="1">Secreted</location>
    </subcellularLocation>
    <subcellularLocation>
        <location evidence="1">Host Golgi apparatus membrane</location>
    </subcellularLocation>
    <text evidence="1">TGN localization requires PACS1. Associates with the inner plasma membrane through its N-terminal domain. Nef stimulates its own export via the release of exosomes. Incorporated in virions at a rate of about 10 molecules per virion, where it is cleaved.</text>
</comment>
<comment type="induction">
    <text evidence="1">Expressed early in the viral replication cycle.</text>
</comment>
<comment type="domain">
    <text evidence="1">The N-terminal domain is composed of the N-myristoyl glycine and of a cluster of positively charged amino acids. It is required for inner plasma membrane targeting of Nef and virion incorporation, and thereby for infectivity. This domain is also involved in binding to TP53.</text>
</comment>
<comment type="domain">
    <text evidence="1">The SH3-binding domain constituted of PxxP motifs mediates binding to several Src family proteins thereby regulating their tyrosine kinase activity. The same motifs also mediates the association with MAPK3, PI3-kinase and TCR-zeta.</text>
</comment>
<comment type="domain">
    <text evidence="1">The dileucine internalization motif and a diacidic motif seem to be required for binding to AP-2.</text>
</comment>
<comment type="domain">
    <text evidence="1">The acidic region binds to the sorting protein PACS-2, which targets Nef to the paranuclear region, enabling the PxxP motif to direct assembly of an SFK/ZAP-70/PI3K complex that accelerates endocytosis of cell-surface MHC-I.</text>
</comment>
<comment type="PTM">
    <text evidence="1">The virion-associated Nef proteins are cleaved by the viral protease to release the soluble C-terminal core protein. Nef is probably cleaved concomitantly with viral structural proteins on maturation of virus particles.</text>
</comment>
<comment type="PTM">
    <text evidence="1">Myristoylated.</text>
</comment>
<comment type="PTM">
    <text evidence="1">Phosphorylated on serine residues, probably by host PKCdelta and theta.</text>
</comment>
<comment type="miscellaneous">
    <text evidence="1">HIV-1 lineages are divided in three main groups, M (for Major), O (for Outlier), and N (for New, or Non-M, Non-O). The vast majority of strains found worldwide belong to the group M. Group O seems to be endemic to and largely confined to Cameroon and neighboring countries in West Central Africa, where these viruses represent a small minority of HIV-1 strains. The group N is represented by a limited number of isolates from Cameroonian persons. The group M is further subdivided in 9 clades or subtypes (A to D, F to H, J and K).</text>
</comment>
<comment type="similarity">
    <text evidence="1">Belongs to the lentivirus primate group Nef protein family.</text>
</comment>
<feature type="initiator methionine" description="Removed; by host" evidence="1">
    <location>
        <position position="1"/>
    </location>
</feature>
<feature type="chain" id="PRO_0000244815" description="Protein Nef" evidence="1">
    <location>
        <begin position="2"/>
        <end position="212"/>
    </location>
</feature>
<feature type="chain" id="PRO_0000244816" description="C-terminal core protein" evidence="1">
    <location>
        <begin position="63"/>
        <end position="212"/>
    </location>
</feature>
<feature type="region of interest" description="Acidic; interacts with host PACS1 and PACS2; stabilizes the interaction of NEF/MHC-I with host AP1M1; necessary for MHC-I internalization" evidence="1">
    <location>
        <begin position="67"/>
        <end position="71"/>
    </location>
</feature>
<feature type="region of interest" description="SH3-binding; interaction with Src family tyrosine kinases" evidence="1">
    <location>
        <begin position="75"/>
        <end position="84"/>
    </location>
</feature>
<feature type="region of interest" description="Mediates dimerization, Nef-PTE1 interaction" evidence="1">
    <location>
        <begin position="114"/>
        <end position="130"/>
    </location>
</feature>
<feature type="region of interest" description="Binding to ATP6V1H" evidence="1">
    <location>
        <begin position="154"/>
        <end position="186"/>
    </location>
</feature>
<feature type="short sequence motif" description="PxxP; stabilizes the interaction of NEF/MHC-I with host AP1M1; necessary for MHC-I internalization" evidence="1">
    <location>
        <begin position="78"/>
        <end position="81"/>
    </location>
</feature>
<feature type="short sequence motif" description="Dileucine internalization motif; necessary for CD4 internalization" evidence="1">
    <location>
        <begin position="170"/>
        <end position="171"/>
    </location>
</feature>
<feature type="short sequence motif" description="Diacidic; necessary for CD4 internalization" evidence="1">
    <location>
        <begin position="180"/>
        <end position="181"/>
    </location>
</feature>
<feature type="site" description="Might play a role in AP-1 recruitment to the Nef-MHC-I complex" evidence="1">
    <location>
        <position position="20"/>
    </location>
</feature>
<feature type="site" description="Cleavage; by viral protease" evidence="1">
    <location>
        <begin position="62"/>
        <end position="63"/>
    </location>
</feature>
<feature type="modified residue" description="Phosphoserine; by host" evidence="1">
    <location>
        <position position="6"/>
    </location>
</feature>
<feature type="lipid moiety-binding region" description="N-myristoyl glycine; by host" evidence="1">
    <location>
        <position position="2"/>
    </location>
</feature>
<proteinExistence type="inferred from homology"/>
<protein>
    <recommendedName>
        <fullName evidence="1">Protein Nef</fullName>
    </recommendedName>
    <alternativeName>
        <fullName evidence="1">3'ORF</fullName>
    </alternativeName>
    <alternativeName>
        <fullName evidence="1">Negative factor</fullName>
        <shortName evidence="1">F-protein</shortName>
    </alternativeName>
    <component>
        <recommendedName>
            <fullName evidence="1">C-terminal core protein</fullName>
        </recommendedName>
    </component>
</protein>
<dbReference type="EMBL" id="AJ006022">
    <property type="protein sequence ID" value="CAA06817.1"/>
    <property type="molecule type" value="Genomic_DNA"/>
</dbReference>
<dbReference type="EMBL" id="AY536907">
    <property type="protein sequence ID" value="AAS46887.1"/>
    <property type="molecule type" value="Genomic_DNA"/>
</dbReference>
<dbReference type="SMR" id="O91087"/>
<dbReference type="Proteomes" id="UP000007420">
    <property type="component" value="Segment"/>
</dbReference>
<dbReference type="GO" id="GO:0005576">
    <property type="term" value="C:extracellular region"/>
    <property type="evidence" value="ECO:0007669"/>
    <property type="project" value="UniProtKB-SubCell"/>
</dbReference>
<dbReference type="GO" id="GO:0044178">
    <property type="term" value="C:host cell Golgi membrane"/>
    <property type="evidence" value="ECO:0007669"/>
    <property type="project" value="UniProtKB-SubCell"/>
</dbReference>
<dbReference type="GO" id="GO:0020002">
    <property type="term" value="C:host cell plasma membrane"/>
    <property type="evidence" value="ECO:0007669"/>
    <property type="project" value="UniProtKB-SubCell"/>
</dbReference>
<dbReference type="GO" id="GO:0016020">
    <property type="term" value="C:membrane"/>
    <property type="evidence" value="ECO:0007669"/>
    <property type="project" value="UniProtKB-UniRule"/>
</dbReference>
<dbReference type="GO" id="GO:0044423">
    <property type="term" value="C:virion component"/>
    <property type="evidence" value="ECO:0007669"/>
    <property type="project" value="UniProtKB-UniRule"/>
</dbReference>
<dbReference type="GO" id="GO:0005525">
    <property type="term" value="F:GTP binding"/>
    <property type="evidence" value="ECO:0007669"/>
    <property type="project" value="UniProtKB-UniRule"/>
</dbReference>
<dbReference type="GO" id="GO:0017124">
    <property type="term" value="F:SH3 domain binding"/>
    <property type="evidence" value="ECO:0007669"/>
    <property type="project" value="UniProtKB-UniRule"/>
</dbReference>
<dbReference type="GO" id="GO:0046776">
    <property type="term" value="P:symbiont-mediated suppression of host antigen processing and presentation of peptide antigen via MHC class I"/>
    <property type="evidence" value="ECO:0007669"/>
    <property type="project" value="UniProtKB-UniRule"/>
</dbReference>
<dbReference type="GO" id="GO:0039505">
    <property type="term" value="P:symbiont-mediated suppression of host antigen processing and presentation of peptide antigen via MHC class II"/>
    <property type="evidence" value="ECO:0007669"/>
    <property type="project" value="UniProtKB-UniRule"/>
</dbReference>
<dbReference type="GO" id="GO:0140321">
    <property type="term" value="P:symbiont-mediated suppression of host autophagy"/>
    <property type="evidence" value="ECO:0007669"/>
    <property type="project" value="UniProtKB-KW"/>
</dbReference>
<dbReference type="Gene3D" id="4.10.890.10">
    <property type="entry name" value="HIV 1 nef anchor domain"/>
    <property type="match status" value="1"/>
</dbReference>
<dbReference type="Gene3D" id="3.30.62.10">
    <property type="entry name" value="Nef Regulatory Factor"/>
    <property type="match status" value="1"/>
</dbReference>
<dbReference type="HAMAP" id="MF_04078">
    <property type="entry name" value="NEF_HIV"/>
    <property type="match status" value="1"/>
</dbReference>
<dbReference type="InterPro" id="IPR027480">
    <property type="entry name" value="HIV-1_Nef_anchor_sf"/>
</dbReference>
<dbReference type="InterPro" id="IPR027481">
    <property type="entry name" value="HIV-1_Nef_core_sf"/>
</dbReference>
<dbReference type="InterPro" id="IPR001558">
    <property type="entry name" value="HIV_Nef"/>
</dbReference>
<dbReference type="Pfam" id="PF00469">
    <property type="entry name" value="F-protein"/>
    <property type="match status" value="1"/>
</dbReference>
<dbReference type="SUPFAM" id="SSF55671">
    <property type="entry name" value="Regulatory factor Nef"/>
    <property type="match status" value="1"/>
</dbReference>
<accession>O91087</accession>
<sequence>MGKIWSKSSLVGWPEIRERMRRQTQEPAVEPAVGAGAASQDLANRGAITIRNTRDNNESIAWLEAQEEEEEVGFPVRPQVPLRPITYKQAFDLSFFLKDKGGLEGLVWSRKRQDILDLWMYHTQGILPDWHNYTPGPGIRYPVTFGWCFKLVPLSAEEVEEANEGDNNALLHPICQHGADDDHKEVLVWRFDSSLARRHVARELHPEFYKNC</sequence>
<evidence type="ECO:0000255" key="1">
    <source>
        <dbReference type="HAMAP-Rule" id="MF_04078"/>
    </source>
</evidence>